<sequence>MRRFNTIMQGKTNGGNGPESGTVVVTRTQPKTRKPSLYRVLLLNDDYTPMEFVVHVLQRFFQKNLDDATRIMLHVHNHGVGECGVFTYEVAETKVSQVMDFARQNQHPLQCVMEKK</sequence>
<accession>Q8YHI3</accession>
<organism>
    <name type="scientific">Brucella melitensis biotype 1 (strain ATCC 23456 / CCUG 17765 / NCTC 10094 / 16M)</name>
    <dbReference type="NCBI Taxonomy" id="224914"/>
    <lineage>
        <taxon>Bacteria</taxon>
        <taxon>Pseudomonadati</taxon>
        <taxon>Pseudomonadota</taxon>
        <taxon>Alphaproteobacteria</taxon>
        <taxon>Hyphomicrobiales</taxon>
        <taxon>Brucellaceae</taxon>
        <taxon>Brucella/Ochrobactrum group</taxon>
        <taxon>Brucella</taxon>
    </lineage>
</organism>
<reference key="1">
    <citation type="journal article" date="2002" name="Proc. Natl. Acad. Sci. U.S.A.">
        <title>The genome sequence of the facultative intracellular pathogen Brucella melitensis.</title>
        <authorList>
            <person name="DelVecchio V.G."/>
            <person name="Kapatral V."/>
            <person name="Redkar R.J."/>
            <person name="Patra G."/>
            <person name="Mujer C."/>
            <person name="Los T."/>
            <person name="Ivanova N."/>
            <person name="Anderson I."/>
            <person name="Bhattacharyya A."/>
            <person name="Lykidis A."/>
            <person name="Reznik G."/>
            <person name="Jablonski L."/>
            <person name="Larsen N."/>
            <person name="D'Souza M."/>
            <person name="Bernal A."/>
            <person name="Mazur M."/>
            <person name="Goltsman E."/>
            <person name="Selkov E."/>
            <person name="Elzer P.H."/>
            <person name="Hagius S."/>
            <person name="O'Callaghan D."/>
            <person name="Letesson J.-J."/>
            <person name="Haselkorn R."/>
            <person name="Kyrpides N.C."/>
            <person name="Overbeek R."/>
        </authorList>
    </citation>
    <scope>NUCLEOTIDE SEQUENCE [LARGE SCALE GENOMIC DNA]</scope>
    <source>
        <strain>ATCC 23456 / CCUG 17765 / NCTC 10094 / 16M</strain>
    </source>
</reference>
<gene>
    <name evidence="1" type="primary">clpS</name>
    <name type="ordered locus">BMEI0815</name>
</gene>
<feature type="chain" id="PRO_0000215692" description="ATP-dependent Clp protease adapter protein ClpS">
    <location>
        <begin position="1"/>
        <end position="116"/>
    </location>
</feature>
<feature type="region of interest" description="Disordered" evidence="2">
    <location>
        <begin position="1"/>
        <end position="23"/>
    </location>
</feature>
<feature type="compositionally biased region" description="Polar residues" evidence="2">
    <location>
        <begin position="1"/>
        <end position="11"/>
    </location>
</feature>
<proteinExistence type="inferred from homology"/>
<protein>
    <recommendedName>
        <fullName evidence="1">ATP-dependent Clp protease adapter protein ClpS</fullName>
    </recommendedName>
</protein>
<evidence type="ECO:0000255" key="1">
    <source>
        <dbReference type="HAMAP-Rule" id="MF_00302"/>
    </source>
</evidence>
<evidence type="ECO:0000256" key="2">
    <source>
        <dbReference type="SAM" id="MobiDB-lite"/>
    </source>
</evidence>
<evidence type="ECO:0000305" key="3"/>
<dbReference type="EMBL" id="AE008917">
    <property type="protein sequence ID" value="AAL51996.1"/>
    <property type="status" value="ALT_INIT"/>
    <property type="molecule type" value="Genomic_DNA"/>
</dbReference>
<dbReference type="PIR" id="AI3353">
    <property type="entry name" value="AI3353"/>
</dbReference>
<dbReference type="RefSeq" id="WP_004686968.1">
    <property type="nucleotide sequence ID" value="NZ_GG703780.1"/>
</dbReference>
<dbReference type="SMR" id="Q8YHI3"/>
<dbReference type="GeneID" id="29593633"/>
<dbReference type="KEGG" id="bme:BMEI0815"/>
<dbReference type="eggNOG" id="COG2127">
    <property type="taxonomic scope" value="Bacteria"/>
</dbReference>
<dbReference type="Proteomes" id="UP000000419">
    <property type="component" value="Chromosome I"/>
</dbReference>
<dbReference type="GO" id="GO:0030163">
    <property type="term" value="P:protein catabolic process"/>
    <property type="evidence" value="ECO:0007669"/>
    <property type="project" value="InterPro"/>
</dbReference>
<dbReference type="GO" id="GO:0006508">
    <property type="term" value="P:proteolysis"/>
    <property type="evidence" value="ECO:0007669"/>
    <property type="project" value="UniProtKB-UniRule"/>
</dbReference>
<dbReference type="FunFam" id="3.30.1390.10:FF:000002">
    <property type="entry name" value="ATP-dependent Clp protease adapter protein ClpS"/>
    <property type="match status" value="1"/>
</dbReference>
<dbReference type="Gene3D" id="3.30.1390.10">
    <property type="match status" value="1"/>
</dbReference>
<dbReference type="HAMAP" id="MF_00302">
    <property type="entry name" value="ClpS"/>
    <property type="match status" value="1"/>
</dbReference>
<dbReference type="InterPro" id="IPR022935">
    <property type="entry name" value="ClpS"/>
</dbReference>
<dbReference type="InterPro" id="IPR003769">
    <property type="entry name" value="ClpS_core"/>
</dbReference>
<dbReference type="InterPro" id="IPR014719">
    <property type="entry name" value="Ribosomal_bL12_C/ClpS-like"/>
</dbReference>
<dbReference type="NCBIfam" id="NF000669">
    <property type="entry name" value="PRK00033.1-2"/>
    <property type="match status" value="1"/>
</dbReference>
<dbReference type="NCBIfam" id="NF000672">
    <property type="entry name" value="PRK00033.1-5"/>
    <property type="match status" value="1"/>
</dbReference>
<dbReference type="PANTHER" id="PTHR33473:SF19">
    <property type="entry name" value="ATP-DEPENDENT CLP PROTEASE ADAPTER PROTEIN CLPS"/>
    <property type="match status" value="1"/>
</dbReference>
<dbReference type="PANTHER" id="PTHR33473">
    <property type="entry name" value="ATP-DEPENDENT CLP PROTEASE ADAPTER PROTEIN CLPS1, CHLOROPLASTIC"/>
    <property type="match status" value="1"/>
</dbReference>
<dbReference type="Pfam" id="PF02617">
    <property type="entry name" value="ClpS"/>
    <property type="match status" value="1"/>
</dbReference>
<dbReference type="SUPFAM" id="SSF54736">
    <property type="entry name" value="ClpS-like"/>
    <property type="match status" value="1"/>
</dbReference>
<comment type="function">
    <text evidence="1">Involved in the modulation of the specificity of the ClpAP-mediated ATP-dependent protein degradation.</text>
</comment>
<comment type="subunit">
    <text evidence="1">Binds to the N-terminal domain of the chaperone ClpA.</text>
</comment>
<comment type="similarity">
    <text evidence="1">Belongs to the ClpS family.</text>
</comment>
<comment type="sequence caution" evidence="3">
    <conflict type="erroneous initiation">
        <sequence resource="EMBL-CDS" id="AAL51996"/>
    </conflict>
</comment>
<name>CLPS_BRUME</name>